<name>CH10_SHEFN</name>
<dbReference type="EMBL" id="CP000447">
    <property type="protein sequence ID" value="ABI73488.1"/>
    <property type="molecule type" value="Genomic_DNA"/>
</dbReference>
<dbReference type="RefSeq" id="WP_011639076.1">
    <property type="nucleotide sequence ID" value="NC_008345.1"/>
</dbReference>
<dbReference type="SMR" id="Q07WX6"/>
<dbReference type="STRING" id="318167.Sfri_3661"/>
<dbReference type="KEGG" id="sfr:Sfri_3661"/>
<dbReference type="eggNOG" id="COG0234">
    <property type="taxonomic scope" value="Bacteria"/>
</dbReference>
<dbReference type="HOGENOM" id="CLU_132825_1_1_6"/>
<dbReference type="OrthoDB" id="9806791at2"/>
<dbReference type="Proteomes" id="UP000000684">
    <property type="component" value="Chromosome"/>
</dbReference>
<dbReference type="GO" id="GO:0005737">
    <property type="term" value="C:cytoplasm"/>
    <property type="evidence" value="ECO:0007669"/>
    <property type="project" value="UniProtKB-SubCell"/>
</dbReference>
<dbReference type="GO" id="GO:0005524">
    <property type="term" value="F:ATP binding"/>
    <property type="evidence" value="ECO:0007669"/>
    <property type="project" value="InterPro"/>
</dbReference>
<dbReference type="GO" id="GO:0046872">
    <property type="term" value="F:metal ion binding"/>
    <property type="evidence" value="ECO:0007669"/>
    <property type="project" value="TreeGrafter"/>
</dbReference>
<dbReference type="GO" id="GO:0044183">
    <property type="term" value="F:protein folding chaperone"/>
    <property type="evidence" value="ECO:0007669"/>
    <property type="project" value="InterPro"/>
</dbReference>
<dbReference type="GO" id="GO:0051087">
    <property type="term" value="F:protein-folding chaperone binding"/>
    <property type="evidence" value="ECO:0007669"/>
    <property type="project" value="TreeGrafter"/>
</dbReference>
<dbReference type="GO" id="GO:0051082">
    <property type="term" value="F:unfolded protein binding"/>
    <property type="evidence" value="ECO:0007669"/>
    <property type="project" value="TreeGrafter"/>
</dbReference>
<dbReference type="GO" id="GO:0051085">
    <property type="term" value="P:chaperone cofactor-dependent protein refolding"/>
    <property type="evidence" value="ECO:0007669"/>
    <property type="project" value="TreeGrafter"/>
</dbReference>
<dbReference type="CDD" id="cd00320">
    <property type="entry name" value="cpn10"/>
    <property type="match status" value="1"/>
</dbReference>
<dbReference type="FunFam" id="2.30.33.40:FF:000001">
    <property type="entry name" value="10 kDa chaperonin"/>
    <property type="match status" value="1"/>
</dbReference>
<dbReference type="Gene3D" id="2.30.33.40">
    <property type="entry name" value="GroES chaperonin"/>
    <property type="match status" value="1"/>
</dbReference>
<dbReference type="HAMAP" id="MF_00580">
    <property type="entry name" value="CH10"/>
    <property type="match status" value="1"/>
</dbReference>
<dbReference type="InterPro" id="IPR020818">
    <property type="entry name" value="Chaperonin_GroES"/>
</dbReference>
<dbReference type="InterPro" id="IPR037124">
    <property type="entry name" value="Chaperonin_GroES_sf"/>
</dbReference>
<dbReference type="InterPro" id="IPR018369">
    <property type="entry name" value="Chaprnonin_Cpn10_CS"/>
</dbReference>
<dbReference type="InterPro" id="IPR011032">
    <property type="entry name" value="GroES-like_sf"/>
</dbReference>
<dbReference type="NCBIfam" id="NF001526">
    <property type="entry name" value="PRK00364.1-1"/>
    <property type="match status" value="1"/>
</dbReference>
<dbReference type="NCBIfam" id="NF001527">
    <property type="entry name" value="PRK00364.1-2"/>
    <property type="match status" value="1"/>
</dbReference>
<dbReference type="NCBIfam" id="NF001531">
    <property type="entry name" value="PRK00364.2-2"/>
    <property type="match status" value="1"/>
</dbReference>
<dbReference type="PANTHER" id="PTHR10772">
    <property type="entry name" value="10 KDA HEAT SHOCK PROTEIN"/>
    <property type="match status" value="1"/>
</dbReference>
<dbReference type="PANTHER" id="PTHR10772:SF58">
    <property type="entry name" value="CO-CHAPERONIN GROES"/>
    <property type="match status" value="1"/>
</dbReference>
<dbReference type="Pfam" id="PF00166">
    <property type="entry name" value="Cpn10"/>
    <property type="match status" value="1"/>
</dbReference>
<dbReference type="PRINTS" id="PR00297">
    <property type="entry name" value="CHAPERONIN10"/>
</dbReference>
<dbReference type="SMART" id="SM00883">
    <property type="entry name" value="Cpn10"/>
    <property type="match status" value="1"/>
</dbReference>
<dbReference type="SUPFAM" id="SSF50129">
    <property type="entry name" value="GroES-like"/>
    <property type="match status" value="1"/>
</dbReference>
<dbReference type="PROSITE" id="PS00681">
    <property type="entry name" value="CHAPERONINS_CPN10"/>
    <property type="match status" value="1"/>
</dbReference>
<evidence type="ECO:0000255" key="1">
    <source>
        <dbReference type="HAMAP-Rule" id="MF_00580"/>
    </source>
</evidence>
<feature type="chain" id="PRO_1000025362" description="Co-chaperonin GroES">
    <location>
        <begin position="1"/>
        <end position="96"/>
    </location>
</feature>
<reference key="1">
    <citation type="submission" date="2006-08" db="EMBL/GenBank/DDBJ databases">
        <title>Complete sequence of Shewanella frigidimarina NCIMB 400.</title>
        <authorList>
            <consortium name="US DOE Joint Genome Institute"/>
            <person name="Copeland A."/>
            <person name="Lucas S."/>
            <person name="Lapidus A."/>
            <person name="Barry K."/>
            <person name="Detter J.C."/>
            <person name="Glavina del Rio T."/>
            <person name="Hammon N."/>
            <person name="Israni S."/>
            <person name="Dalin E."/>
            <person name="Tice H."/>
            <person name="Pitluck S."/>
            <person name="Fredrickson J.K."/>
            <person name="Kolker E."/>
            <person name="McCuel L.A."/>
            <person name="DiChristina T."/>
            <person name="Nealson K.H."/>
            <person name="Newman D."/>
            <person name="Tiedje J.M."/>
            <person name="Zhou J."/>
            <person name="Romine M.F."/>
            <person name="Culley D.E."/>
            <person name="Serres M."/>
            <person name="Chertkov O."/>
            <person name="Brettin T."/>
            <person name="Bruce D."/>
            <person name="Han C."/>
            <person name="Tapia R."/>
            <person name="Gilna P."/>
            <person name="Schmutz J."/>
            <person name="Larimer F."/>
            <person name="Land M."/>
            <person name="Hauser L."/>
            <person name="Kyrpides N."/>
            <person name="Mikhailova N."/>
            <person name="Richardson P."/>
        </authorList>
    </citation>
    <scope>NUCLEOTIDE SEQUENCE [LARGE SCALE GENOMIC DNA]</scope>
    <source>
        <strain>NCIMB 400</strain>
    </source>
</reference>
<proteinExistence type="inferred from homology"/>
<sequence>MNIRPLHDRVIVKRLEVESKSAGGIVLTGSAAEKSTRGKILAVGNGRISENGTVTPLDVKVGDVVIFNEGYGVKKEKIDGEEVLILSEADLMAVVG</sequence>
<protein>
    <recommendedName>
        <fullName evidence="1">Co-chaperonin GroES</fullName>
    </recommendedName>
    <alternativeName>
        <fullName evidence="1">10 kDa chaperonin</fullName>
    </alternativeName>
    <alternativeName>
        <fullName evidence="1">Chaperonin-10</fullName>
        <shortName evidence="1">Cpn10</shortName>
    </alternativeName>
</protein>
<gene>
    <name evidence="1" type="primary">groES</name>
    <name evidence="1" type="synonym">groS</name>
    <name type="ordered locus">Sfri_3661</name>
</gene>
<comment type="function">
    <text evidence="1">Together with the chaperonin GroEL, plays an essential role in assisting protein folding. The GroEL-GroES system forms a nano-cage that allows encapsulation of the non-native substrate proteins and provides a physical environment optimized to promote and accelerate protein folding. GroES binds to the apical surface of the GroEL ring, thereby capping the opening of the GroEL channel.</text>
</comment>
<comment type="subunit">
    <text evidence="1">Heptamer of 7 subunits arranged in a ring. Interacts with the chaperonin GroEL.</text>
</comment>
<comment type="subcellular location">
    <subcellularLocation>
        <location evidence="1">Cytoplasm</location>
    </subcellularLocation>
</comment>
<comment type="similarity">
    <text evidence="1">Belongs to the GroES chaperonin family.</text>
</comment>
<accession>Q07WX6</accession>
<keyword id="KW-0143">Chaperone</keyword>
<keyword id="KW-0963">Cytoplasm</keyword>
<keyword id="KW-1185">Reference proteome</keyword>
<organism>
    <name type="scientific">Shewanella frigidimarina (strain NCIMB 400)</name>
    <dbReference type="NCBI Taxonomy" id="318167"/>
    <lineage>
        <taxon>Bacteria</taxon>
        <taxon>Pseudomonadati</taxon>
        <taxon>Pseudomonadota</taxon>
        <taxon>Gammaproteobacteria</taxon>
        <taxon>Alteromonadales</taxon>
        <taxon>Shewanellaceae</taxon>
        <taxon>Shewanella</taxon>
    </lineage>
</organism>